<evidence type="ECO:0000255" key="1">
    <source>
        <dbReference type="PROSITE-ProRule" id="PRU00042"/>
    </source>
</evidence>
<evidence type="ECO:0000269" key="2">
    <source>
    </source>
</evidence>
<evidence type="ECO:0000269" key="3">
    <source>
    </source>
</evidence>
<evidence type="ECO:0000303" key="4">
    <source>
    </source>
</evidence>
<evidence type="ECO:0000305" key="5"/>
<dbReference type="EMBL" id="AK054613">
    <property type="protein sequence ID" value="BAB70773.1"/>
    <property type="molecule type" value="mRNA"/>
</dbReference>
<dbReference type="EMBL" id="AK297216">
    <property type="protein sequence ID" value="BAG59699.1"/>
    <property type="molecule type" value="mRNA"/>
</dbReference>
<dbReference type="EMBL" id="BC013762">
    <property type="protein sequence ID" value="AAH13762.2"/>
    <property type="molecule type" value="mRNA"/>
</dbReference>
<dbReference type="CCDS" id="CCDS2720.2">
    <molecule id="Q96CX3-1"/>
</dbReference>
<dbReference type="RefSeq" id="NP_001245209.1">
    <molecule id="Q96CX3-1"/>
    <property type="nucleotide sequence ID" value="NM_001258280.2"/>
</dbReference>
<dbReference type="RefSeq" id="NP_659481.2">
    <molecule id="Q96CX3-1"/>
    <property type="nucleotide sequence ID" value="NM_145044.4"/>
</dbReference>
<dbReference type="RefSeq" id="XP_047303355.1">
    <molecule id="Q96CX3-1"/>
    <property type="nucleotide sequence ID" value="XM_047447399.1"/>
</dbReference>
<dbReference type="RefSeq" id="XP_054187516.1">
    <molecule id="Q96CX3-1"/>
    <property type="nucleotide sequence ID" value="XM_054331541.1"/>
</dbReference>
<dbReference type="SMR" id="Q96CX3"/>
<dbReference type="BioGRID" id="125439">
    <property type="interactions" value="11"/>
</dbReference>
<dbReference type="FunCoup" id="Q96CX3">
    <property type="interactions" value="528"/>
</dbReference>
<dbReference type="IntAct" id="Q96CX3">
    <property type="interactions" value="7"/>
</dbReference>
<dbReference type="STRING" id="9606.ENSP00000482632"/>
<dbReference type="GlyGen" id="Q96CX3">
    <property type="glycosylation" value="2 sites, 2 N-linked glycans (2 sites)"/>
</dbReference>
<dbReference type="iPTMnet" id="Q96CX3"/>
<dbReference type="PhosphoSitePlus" id="Q96CX3"/>
<dbReference type="BioMuta" id="ZNF501"/>
<dbReference type="DMDM" id="118597385"/>
<dbReference type="jPOST" id="Q96CX3"/>
<dbReference type="MassIVE" id="Q96CX3"/>
<dbReference type="PaxDb" id="9606-ENSP00000482632"/>
<dbReference type="PeptideAtlas" id="Q96CX3"/>
<dbReference type="ProteomicsDB" id="76238">
    <molecule id="Q96CX3-1"/>
</dbReference>
<dbReference type="ProteomicsDB" id="76239">
    <molecule id="Q96CX3-2"/>
</dbReference>
<dbReference type="Antibodypedia" id="29479">
    <property type="antibodies" value="40 antibodies from 14 providers"/>
</dbReference>
<dbReference type="DNASU" id="115560"/>
<dbReference type="Ensembl" id="ENST00000396048.6">
    <molecule id="Q96CX3-1"/>
    <property type="protein sequence ID" value="ENSP00000379363.2"/>
    <property type="gene ID" value="ENSG00000186446.12"/>
</dbReference>
<dbReference type="Ensembl" id="ENST00000620116.5">
    <molecule id="Q96CX3-1"/>
    <property type="protein sequence ID" value="ENSP00000482632.1"/>
    <property type="gene ID" value="ENSG00000186446.12"/>
</dbReference>
<dbReference type="Ensembl" id="ENST00000625592.3">
    <molecule id="Q96CX3-1"/>
    <property type="protein sequence ID" value="ENSP00000485862.1"/>
    <property type="gene ID" value="ENSG00000281661.3"/>
</dbReference>
<dbReference type="Ensembl" id="ENST00000627775.2">
    <molecule id="Q96CX3-1"/>
    <property type="protein sequence ID" value="ENSP00000487032.1"/>
    <property type="gene ID" value="ENSG00000281661.3"/>
</dbReference>
<dbReference type="GeneID" id="115560"/>
<dbReference type="KEGG" id="hsa:115560"/>
<dbReference type="MANE-Select" id="ENST00000620116.5">
    <property type="protein sequence ID" value="ENSP00000482632.1"/>
    <property type="RefSeq nucleotide sequence ID" value="NM_001258280.2"/>
    <property type="RefSeq protein sequence ID" value="NP_001245209.1"/>
</dbReference>
<dbReference type="UCSC" id="uc003cnu.3">
    <molecule id="Q96CX3-1"/>
    <property type="organism name" value="human"/>
</dbReference>
<dbReference type="AGR" id="HGNC:23717"/>
<dbReference type="CTD" id="115560"/>
<dbReference type="DisGeNET" id="115560"/>
<dbReference type="GeneCards" id="ZNF501"/>
<dbReference type="HGNC" id="HGNC:23717">
    <property type="gene designation" value="ZNF501"/>
</dbReference>
<dbReference type="HPA" id="ENSG00000186446">
    <property type="expression patterns" value="Low tissue specificity"/>
</dbReference>
<dbReference type="neXtProt" id="NX_Q96CX3"/>
<dbReference type="OpenTargets" id="ENSG00000186446"/>
<dbReference type="PharmGKB" id="PA134959192"/>
<dbReference type="VEuPathDB" id="HostDB:ENSG00000186446"/>
<dbReference type="eggNOG" id="KOG1721">
    <property type="taxonomic scope" value="Eukaryota"/>
</dbReference>
<dbReference type="GeneTree" id="ENSGT00940000153104"/>
<dbReference type="HOGENOM" id="CLU_002678_2_1_1"/>
<dbReference type="InParanoid" id="Q96CX3"/>
<dbReference type="OMA" id="GSCFCKQ"/>
<dbReference type="OrthoDB" id="8113227at2759"/>
<dbReference type="PAN-GO" id="Q96CX3">
    <property type="GO annotations" value="3 GO annotations based on evolutionary models"/>
</dbReference>
<dbReference type="PhylomeDB" id="Q96CX3"/>
<dbReference type="TreeFam" id="TF337055"/>
<dbReference type="PathwayCommons" id="Q96CX3"/>
<dbReference type="SignaLink" id="Q96CX3"/>
<dbReference type="BioGRID-ORCS" id="115560">
    <property type="hits" value="34 hits in 1109 CRISPR screens"/>
</dbReference>
<dbReference type="CD-CODE" id="91857CE7">
    <property type="entry name" value="Nucleolus"/>
</dbReference>
<dbReference type="ChiTaRS" id="ZNF501">
    <property type="organism name" value="human"/>
</dbReference>
<dbReference type="GenomeRNAi" id="115560"/>
<dbReference type="Pharos" id="Q96CX3">
    <property type="development level" value="Tdark"/>
</dbReference>
<dbReference type="PRO" id="PR:Q96CX3"/>
<dbReference type="Proteomes" id="UP000005640">
    <property type="component" value="Chromosome 3"/>
</dbReference>
<dbReference type="RNAct" id="Q96CX3">
    <property type="molecule type" value="protein"/>
</dbReference>
<dbReference type="Bgee" id="ENSG00000186446">
    <property type="expression patterns" value="Expressed in primordial germ cell in gonad and 110 other cell types or tissues"/>
</dbReference>
<dbReference type="GO" id="GO:0005730">
    <property type="term" value="C:nucleolus"/>
    <property type="evidence" value="ECO:0007669"/>
    <property type="project" value="UniProtKB-SubCell"/>
</dbReference>
<dbReference type="GO" id="GO:0005634">
    <property type="term" value="C:nucleus"/>
    <property type="evidence" value="ECO:0000314"/>
    <property type="project" value="UniProtKB"/>
</dbReference>
<dbReference type="GO" id="GO:0003700">
    <property type="term" value="F:DNA-binding transcription factor activity"/>
    <property type="evidence" value="ECO:0000318"/>
    <property type="project" value="GO_Central"/>
</dbReference>
<dbReference type="GO" id="GO:0000978">
    <property type="term" value="F:RNA polymerase II cis-regulatory region sequence-specific DNA binding"/>
    <property type="evidence" value="ECO:0000318"/>
    <property type="project" value="GO_Central"/>
</dbReference>
<dbReference type="GO" id="GO:1990837">
    <property type="term" value="F:sequence-specific double-stranded DNA binding"/>
    <property type="evidence" value="ECO:0000314"/>
    <property type="project" value="ARUK-UCL"/>
</dbReference>
<dbReference type="GO" id="GO:0008270">
    <property type="term" value="F:zinc ion binding"/>
    <property type="evidence" value="ECO:0007669"/>
    <property type="project" value="UniProtKB-KW"/>
</dbReference>
<dbReference type="GO" id="GO:0007030">
    <property type="term" value="P:Golgi organization"/>
    <property type="evidence" value="ECO:0000315"/>
    <property type="project" value="UniProtKB"/>
</dbReference>
<dbReference type="GO" id="GO:0006357">
    <property type="term" value="P:regulation of transcription by RNA polymerase II"/>
    <property type="evidence" value="ECO:0000318"/>
    <property type="project" value="GO_Central"/>
</dbReference>
<dbReference type="FunFam" id="3.30.160.60:FF:001478">
    <property type="entry name" value="Zinc finger protein 134"/>
    <property type="match status" value="1"/>
</dbReference>
<dbReference type="FunFam" id="3.30.160.60:FF:002259">
    <property type="entry name" value="zinc finger protein 271"/>
    <property type="match status" value="1"/>
</dbReference>
<dbReference type="FunFam" id="3.30.160.60:FF:000352">
    <property type="entry name" value="zinc finger protein 3 homolog"/>
    <property type="match status" value="1"/>
</dbReference>
<dbReference type="FunFam" id="3.30.160.60:FF:002343">
    <property type="entry name" value="Zinc finger protein 33A"/>
    <property type="match status" value="1"/>
</dbReference>
<dbReference type="FunFam" id="3.30.160.60:FF:001498">
    <property type="entry name" value="Zinc finger protein 404"/>
    <property type="match status" value="1"/>
</dbReference>
<dbReference type="FunFam" id="3.30.160.60:FF:002090">
    <property type="entry name" value="Zinc finger protein 473"/>
    <property type="match status" value="1"/>
</dbReference>
<dbReference type="FunFam" id="3.30.160.60:FF:001611">
    <property type="entry name" value="Zinc finger protein 501"/>
    <property type="match status" value="1"/>
</dbReference>
<dbReference type="FunFam" id="3.30.160.60:FF:001880">
    <property type="entry name" value="zinc finger protein 69 homolog isoform X2"/>
    <property type="match status" value="1"/>
</dbReference>
<dbReference type="FunFam" id="3.30.160.60:FF:001442">
    <property type="entry name" value="zinc finger protein 696"/>
    <property type="match status" value="1"/>
</dbReference>
<dbReference type="Gene3D" id="3.30.160.60">
    <property type="entry name" value="Classic Zinc Finger"/>
    <property type="match status" value="9"/>
</dbReference>
<dbReference type="InterPro" id="IPR036236">
    <property type="entry name" value="Znf_C2H2_sf"/>
</dbReference>
<dbReference type="InterPro" id="IPR013087">
    <property type="entry name" value="Znf_C2H2_type"/>
</dbReference>
<dbReference type="PANTHER" id="PTHR24381">
    <property type="entry name" value="ZINC FINGER PROTEIN"/>
    <property type="match status" value="1"/>
</dbReference>
<dbReference type="PANTHER" id="PTHR24381:SF390">
    <property type="entry name" value="ZINC FINGER PROTEIN 37 HOMOLOG"/>
    <property type="match status" value="1"/>
</dbReference>
<dbReference type="Pfam" id="PF00096">
    <property type="entry name" value="zf-C2H2"/>
    <property type="match status" value="9"/>
</dbReference>
<dbReference type="SMART" id="SM00355">
    <property type="entry name" value="ZnF_C2H2"/>
    <property type="match status" value="9"/>
</dbReference>
<dbReference type="SUPFAM" id="SSF57667">
    <property type="entry name" value="beta-beta-alpha zinc fingers"/>
    <property type="match status" value="5"/>
</dbReference>
<dbReference type="PROSITE" id="PS00028">
    <property type="entry name" value="ZINC_FINGER_C2H2_1"/>
    <property type="match status" value="9"/>
</dbReference>
<dbReference type="PROSITE" id="PS50157">
    <property type="entry name" value="ZINC_FINGER_C2H2_2"/>
    <property type="match status" value="9"/>
</dbReference>
<proteinExistence type="evidence at protein level"/>
<protein>
    <recommendedName>
        <fullName>Zinc finger protein 501</fullName>
    </recommendedName>
    <alternativeName>
        <fullName>Zinc finger protein 52</fullName>
    </alternativeName>
</protein>
<sequence>MNSSQISLRMKHGRVNMQKKPSKCSECGKFFTQRSSLTQHQRIHRGEKPYVCSECGSCFRKQSNLTQHLRIHTGEKPYKCNECEKAFQTKAILVQHLRIHTGEKPYKCNECGKAFCQSPSLIKHQRIHTGEKPYKCTECGKAFSQSICLTRHQRSHSGDKPFKCNECGKAFNQSACLMQHQRIHSGEKPYTCTECGKAFTQNSSLVEHERTHTGEKLYKCSECEKTFRKQAHLSEHYRIHTGEKPYECVGCGKSFRHSSALLRHQRLHAGE</sequence>
<name>ZN501_HUMAN</name>
<comment type="function">
    <text evidence="3">May be involved in transcriptional regulation. Essential for Golgi structural integrity (PubMed:29851555).</text>
</comment>
<comment type="subcellular location">
    <subcellularLocation>
        <location evidence="3">Nucleus</location>
    </subcellularLocation>
    <subcellularLocation>
        <location evidence="3">Nucleus</location>
        <location evidence="3">Nucleolus</location>
    </subcellularLocation>
</comment>
<comment type="alternative products">
    <event type="alternative splicing"/>
    <isoform>
        <id>Q96CX3-1</id>
        <name>1</name>
        <sequence type="displayed"/>
    </isoform>
    <isoform>
        <id>Q96CX3-2</id>
        <name>2</name>
        <sequence type="described" ref="VSP_010173"/>
    </isoform>
</comment>
<comment type="induction">
    <text evidence="3">Up-regulated by Golgi stress-inducing agent nigericin.</text>
</comment>
<comment type="miscellaneous">
    <molecule>Isoform 2</molecule>
    <text evidence="5">May be due to exon skipping.</text>
</comment>
<comment type="similarity">
    <text evidence="5">Belongs to the krueppel C2H2-type zinc-finger protein family.</text>
</comment>
<keyword id="KW-0025">Alternative splicing</keyword>
<keyword id="KW-0238">DNA-binding</keyword>
<keyword id="KW-0479">Metal-binding</keyword>
<keyword id="KW-0539">Nucleus</keyword>
<keyword id="KW-1267">Proteomics identification</keyword>
<keyword id="KW-1185">Reference proteome</keyword>
<keyword id="KW-0677">Repeat</keyword>
<keyword id="KW-0804">Transcription</keyword>
<keyword id="KW-0805">Transcription regulation</keyword>
<keyword id="KW-0862">Zinc</keyword>
<keyword id="KW-0863">Zinc-finger</keyword>
<accession>Q96CX3</accession>
<accession>B4DLY7</accession>
<accession>Q96NU9</accession>
<gene>
    <name type="primary">ZNF501</name>
    <name type="synonym">ZNF52</name>
</gene>
<feature type="chain" id="PRO_0000047621" description="Zinc finger protein 501">
    <location>
        <begin position="1"/>
        <end position="271"/>
    </location>
</feature>
<feature type="zinc finger region" description="C2H2-type 1" evidence="1">
    <location>
        <begin position="22"/>
        <end position="44"/>
    </location>
</feature>
<feature type="zinc finger region" description="C2H2-type 2" evidence="1">
    <location>
        <begin position="50"/>
        <end position="72"/>
    </location>
</feature>
<feature type="zinc finger region" description="C2H2-type 3" evidence="1">
    <location>
        <begin position="78"/>
        <end position="100"/>
    </location>
</feature>
<feature type="zinc finger region" description="C2H2-type 4" evidence="1">
    <location>
        <begin position="106"/>
        <end position="128"/>
    </location>
</feature>
<feature type="zinc finger region" description="C2H2-type 5" evidence="1">
    <location>
        <begin position="134"/>
        <end position="156"/>
    </location>
</feature>
<feature type="zinc finger region" description="C2H2-type 6" evidence="1">
    <location>
        <begin position="162"/>
        <end position="184"/>
    </location>
</feature>
<feature type="zinc finger region" description="C2H2-type 7" evidence="1">
    <location>
        <begin position="190"/>
        <end position="212"/>
    </location>
</feature>
<feature type="zinc finger region" description="C2H2-type 8" evidence="1">
    <location>
        <begin position="218"/>
        <end position="240"/>
    </location>
</feature>
<feature type="zinc finger region" description="C2H2-type 9" evidence="1">
    <location>
        <begin position="246"/>
        <end position="268"/>
    </location>
</feature>
<feature type="splice variant" id="VSP_010173" description="In isoform 2." evidence="4">
    <location>
        <begin position="144"/>
        <end position="199"/>
    </location>
</feature>
<feature type="sequence variant" id="VAR_024219" description="In dbSNP:rs4682752." evidence="2">
    <original>M</original>
    <variation>V</variation>
    <location>
        <position position="17"/>
    </location>
</feature>
<feature type="sequence variant" id="VAR_061952" description="In dbSNP:rs58211979.">
    <original>I</original>
    <variation>V</variation>
    <location>
        <position position="147"/>
    </location>
</feature>
<reference key="1">
    <citation type="journal article" date="2004" name="Nat. Genet.">
        <title>Complete sequencing and characterization of 21,243 full-length human cDNAs.</title>
        <authorList>
            <person name="Ota T."/>
            <person name="Suzuki Y."/>
            <person name="Nishikawa T."/>
            <person name="Otsuki T."/>
            <person name="Sugiyama T."/>
            <person name="Irie R."/>
            <person name="Wakamatsu A."/>
            <person name="Hayashi K."/>
            <person name="Sato H."/>
            <person name="Nagai K."/>
            <person name="Kimura K."/>
            <person name="Makita H."/>
            <person name="Sekine M."/>
            <person name="Obayashi M."/>
            <person name="Nishi T."/>
            <person name="Shibahara T."/>
            <person name="Tanaka T."/>
            <person name="Ishii S."/>
            <person name="Yamamoto J."/>
            <person name="Saito K."/>
            <person name="Kawai Y."/>
            <person name="Isono Y."/>
            <person name="Nakamura Y."/>
            <person name="Nagahari K."/>
            <person name="Murakami K."/>
            <person name="Yasuda T."/>
            <person name="Iwayanagi T."/>
            <person name="Wagatsuma M."/>
            <person name="Shiratori A."/>
            <person name="Sudo H."/>
            <person name="Hosoiri T."/>
            <person name="Kaku Y."/>
            <person name="Kodaira H."/>
            <person name="Kondo H."/>
            <person name="Sugawara M."/>
            <person name="Takahashi M."/>
            <person name="Kanda K."/>
            <person name="Yokoi T."/>
            <person name="Furuya T."/>
            <person name="Kikkawa E."/>
            <person name="Omura Y."/>
            <person name="Abe K."/>
            <person name="Kamihara K."/>
            <person name="Katsuta N."/>
            <person name="Sato K."/>
            <person name="Tanikawa M."/>
            <person name="Yamazaki M."/>
            <person name="Ninomiya K."/>
            <person name="Ishibashi T."/>
            <person name="Yamashita H."/>
            <person name="Murakawa K."/>
            <person name="Fujimori K."/>
            <person name="Tanai H."/>
            <person name="Kimata M."/>
            <person name="Watanabe M."/>
            <person name="Hiraoka S."/>
            <person name="Chiba Y."/>
            <person name="Ishida S."/>
            <person name="Ono Y."/>
            <person name="Takiguchi S."/>
            <person name="Watanabe S."/>
            <person name="Yosida M."/>
            <person name="Hotuta T."/>
            <person name="Kusano J."/>
            <person name="Kanehori K."/>
            <person name="Takahashi-Fujii A."/>
            <person name="Hara H."/>
            <person name="Tanase T.-O."/>
            <person name="Nomura Y."/>
            <person name="Togiya S."/>
            <person name="Komai F."/>
            <person name="Hara R."/>
            <person name="Takeuchi K."/>
            <person name="Arita M."/>
            <person name="Imose N."/>
            <person name="Musashino K."/>
            <person name="Yuuki H."/>
            <person name="Oshima A."/>
            <person name="Sasaki N."/>
            <person name="Aotsuka S."/>
            <person name="Yoshikawa Y."/>
            <person name="Matsunawa H."/>
            <person name="Ichihara T."/>
            <person name="Shiohata N."/>
            <person name="Sano S."/>
            <person name="Moriya S."/>
            <person name="Momiyama H."/>
            <person name="Satoh N."/>
            <person name="Takami S."/>
            <person name="Terashima Y."/>
            <person name="Suzuki O."/>
            <person name="Nakagawa S."/>
            <person name="Senoh A."/>
            <person name="Mizoguchi H."/>
            <person name="Goto Y."/>
            <person name="Shimizu F."/>
            <person name="Wakebe H."/>
            <person name="Hishigaki H."/>
            <person name="Watanabe T."/>
            <person name="Sugiyama A."/>
            <person name="Takemoto M."/>
            <person name="Kawakami B."/>
            <person name="Yamazaki M."/>
            <person name="Watanabe K."/>
            <person name="Kumagai A."/>
            <person name="Itakura S."/>
            <person name="Fukuzumi Y."/>
            <person name="Fujimori Y."/>
            <person name="Komiyama M."/>
            <person name="Tashiro H."/>
            <person name="Tanigami A."/>
            <person name="Fujiwara T."/>
            <person name="Ono T."/>
            <person name="Yamada K."/>
            <person name="Fujii Y."/>
            <person name="Ozaki K."/>
            <person name="Hirao M."/>
            <person name="Ohmori Y."/>
            <person name="Kawabata A."/>
            <person name="Hikiji T."/>
            <person name="Kobatake N."/>
            <person name="Inagaki H."/>
            <person name="Ikema Y."/>
            <person name="Okamoto S."/>
            <person name="Okitani R."/>
            <person name="Kawakami T."/>
            <person name="Noguchi S."/>
            <person name="Itoh T."/>
            <person name="Shigeta K."/>
            <person name="Senba T."/>
            <person name="Matsumura K."/>
            <person name="Nakajima Y."/>
            <person name="Mizuno T."/>
            <person name="Morinaga M."/>
            <person name="Sasaki M."/>
            <person name="Togashi T."/>
            <person name="Oyama M."/>
            <person name="Hata H."/>
            <person name="Watanabe M."/>
            <person name="Komatsu T."/>
            <person name="Mizushima-Sugano J."/>
            <person name="Satoh T."/>
            <person name="Shirai Y."/>
            <person name="Takahashi Y."/>
            <person name="Nakagawa K."/>
            <person name="Okumura K."/>
            <person name="Nagase T."/>
            <person name="Nomura N."/>
            <person name="Kikuchi H."/>
            <person name="Masuho Y."/>
            <person name="Yamashita R."/>
            <person name="Nakai K."/>
            <person name="Yada T."/>
            <person name="Nakamura Y."/>
            <person name="Ohara O."/>
            <person name="Isogai T."/>
            <person name="Sugano S."/>
        </authorList>
    </citation>
    <scope>NUCLEOTIDE SEQUENCE [LARGE SCALE MRNA] (ISOFORMS 1 AND 2)</scope>
    <scope>VARIANT VAL-17</scope>
    <source>
        <tissue>Adrenal gland</tissue>
        <tissue>Brain</tissue>
    </source>
</reference>
<reference key="2">
    <citation type="journal article" date="2004" name="Genome Res.">
        <title>The status, quality, and expansion of the NIH full-length cDNA project: the Mammalian Gene Collection (MGC).</title>
        <authorList>
            <consortium name="The MGC Project Team"/>
        </authorList>
    </citation>
    <scope>NUCLEOTIDE SEQUENCE [LARGE SCALE MRNA] (ISOFORM 1)</scope>
    <source>
        <tissue>Embryonic carcinoma</tissue>
        <tissue>Testis</tissue>
    </source>
</reference>
<reference key="3">
    <citation type="journal article" date="2018" name="Mol. Biol. Cell">
        <title>Targeted protein unfolding uncovers a Golgi-specific transcriptional stress response.</title>
        <authorList>
            <person name="Serebrenik Y.V."/>
            <person name="Hellerschmied D."/>
            <person name="Toure M."/>
            <person name="Lopez-Giraldez F."/>
            <person name="Brookner D."/>
            <person name="Crews C.M."/>
        </authorList>
    </citation>
    <scope>FUNCTION</scope>
    <scope>SUBCELLULAR LOCATION</scope>
    <scope>INDUCTION</scope>
</reference>
<organism>
    <name type="scientific">Homo sapiens</name>
    <name type="common">Human</name>
    <dbReference type="NCBI Taxonomy" id="9606"/>
    <lineage>
        <taxon>Eukaryota</taxon>
        <taxon>Metazoa</taxon>
        <taxon>Chordata</taxon>
        <taxon>Craniata</taxon>
        <taxon>Vertebrata</taxon>
        <taxon>Euteleostomi</taxon>
        <taxon>Mammalia</taxon>
        <taxon>Eutheria</taxon>
        <taxon>Euarchontoglires</taxon>
        <taxon>Primates</taxon>
        <taxon>Haplorrhini</taxon>
        <taxon>Catarrhini</taxon>
        <taxon>Hominidae</taxon>
        <taxon>Homo</taxon>
    </lineage>
</organism>